<gene>
    <name type="primary">mef1</name>
    <name type="ORF">AFLA_111680</name>
</gene>
<dbReference type="EMBL" id="EQ963475">
    <property type="protein sequence ID" value="EED53791.1"/>
    <property type="molecule type" value="Genomic_DNA"/>
</dbReference>
<dbReference type="RefSeq" id="XP_002377037.1">
    <property type="nucleotide sequence ID" value="XM_002376996.1"/>
</dbReference>
<dbReference type="SMR" id="B8N9M2"/>
<dbReference type="STRING" id="332952.B8N9M2"/>
<dbReference type="EnsemblFungi" id="EED53791">
    <property type="protein sequence ID" value="EED53791"/>
    <property type="gene ID" value="AFLA_111680"/>
</dbReference>
<dbReference type="VEuPathDB" id="FungiDB:AFLA_007104"/>
<dbReference type="eggNOG" id="KOG0465">
    <property type="taxonomic scope" value="Eukaryota"/>
</dbReference>
<dbReference type="HOGENOM" id="CLU_002794_4_0_1"/>
<dbReference type="OMA" id="GQFAKVQ"/>
<dbReference type="UniPathway" id="UPA00345"/>
<dbReference type="GO" id="GO:0005739">
    <property type="term" value="C:mitochondrion"/>
    <property type="evidence" value="ECO:0007669"/>
    <property type="project" value="UniProtKB-SubCell"/>
</dbReference>
<dbReference type="GO" id="GO:0005525">
    <property type="term" value="F:GTP binding"/>
    <property type="evidence" value="ECO:0007669"/>
    <property type="project" value="UniProtKB-UniRule"/>
</dbReference>
<dbReference type="GO" id="GO:0003924">
    <property type="term" value="F:GTPase activity"/>
    <property type="evidence" value="ECO:0007669"/>
    <property type="project" value="UniProtKB-UniRule"/>
</dbReference>
<dbReference type="GO" id="GO:0003746">
    <property type="term" value="F:translation elongation factor activity"/>
    <property type="evidence" value="ECO:0007669"/>
    <property type="project" value="UniProtKB-UniRule"/>
</dbReference>
<dbReference type="GO" id="GO:0070125">
    <property type="term" value="P:mitochondrial translational elongation"/>
    <property type="evidence" value="ECO:0007669"/>
    <property type="project" value="UniProtKB-UniRule"/>
</dbReference>
<dbReference type="CDD" id="cd01886">
    <property type="entry name" value="EF-G"/>
    <property type="match status" value="1"/>
</dbReference>
<dbReference type="CDD" id="cd16262">
    <property type="entry name" value="EFG_III"/>
    <property type="match status" value="1"/>
</dbReference>
<dbReference type="CDD" id="cd01434">
    <property type="entry name" value="EFG_mtEFG1_IV"/>
    <property type="match status" value="1"/>
</dbReference>
<dbReference type="CDD" id="cd04091">
    <property type="entry name" value="mtEFG1_II_like"/>
    <property type="match status" value="1"/>
</dbReference>
<dbReference type="FunFam" id="3.30.230.10:FF:000003">
    <property type="entry name" value="Elongation factor G"/>
    <property type="match status" value="1"/>
</dbReference>
<dbReference type="FunFam" id="3.30.70.870:FF:000001">
    <property type="entry name" value="Elongation factor G"/>
    <property type="match status" value="1"/>
</dbReference>
<dbReference type="FunFam" id="2.40.30.10:FF:000022">
    <property type="entry name" value="Elongation factor G, mitochondrial"/>
    <property type="match status" value="1"/>
</dbReference>
<dbReference type="FunFam" id="3.30.70.240:FF:000015">
    <property type="entry name" value="Elongation factor G, mitochondrial"/>
    <property type="match status" value="1"/>
</dbReference>
<dbReference type="FunFam" id="3.40.50.300:FF:000558">
    <property type="entry name" value="Elongation factor G, mitochondrial"/>
    <property type="match status" value="1"/>
</dbReference>
<dbReference type="Gene3D" id="3.30.230.10">
    <property type="match status" value="1"/>
</dbReference>
<dbReference type="Gene3D" id="3.30.70.240">
    <property type="match status" value="1"/>
</dbReference>
<dbReference type="Gene3D" id="3.30.70.870">
    <property type="entry name" value="Elongation Factor G (Translational Gtpase), domain 3"/>
    <property type="match status" value="1"/>
</dbReference>
<dbReference type="Gene3D" id="3.40.50.300">
    <property type="entry name" value="P-loop containing nucleotide triphosphate hydrolases"/>
    <property type="match status" value="1"/>
</dbReference>
<dbReference type="Gene3D" id="2.40.30.10">
    <property type="entry name" value="Translation factors"/>
    <property type="match status" value="1"/>
</dbReference>
<dbReference type="HAMAP" id="MF_00054_B">
    <property type="entry name" value="EF_G_EF_2_B"/>
    <property type="match status" value="1"/>
</dbReference>
<dbReference type="InterPro" id="IPR041095">
    <property type="entry name" value="EFG_II"/>
</dbReference>
<dbReference type="InterPro" id="IPR009022">
    <property type="entry name" value="EFG_III"/>
</dbReference>
<dbReference type="InterPro" id="IPR035647">
    <property type="entry name" value="EFG_III/V"/>
</dbReference>
<dbReference type="InterPro" id="IPR047872">
    <property type="entry name" value="EFG_IV"/>
</dbReference>
<dbReference type="InterPro" id="IPR000640">
    <property type="entry name" value="EFG_V-like"/>
</dbReference>
<dbReference type="InterPro" id="IPR004161">
    <property type="entry name" value="EFTu-like_2"/>
</dbReference>
<dbReference type="InterPro" id="IPR031157">
    <property type="entry name" value="G_TR_CS"/>
</dbReference>
<dbReference type="InterPro" id="IPR027417">
    <property type="entry name" value="P-loop_NTPase"/>
</dbReference>
<dbReference type="InterPro" id="IPR020568">
    <property type="entry name" value="Ribosomal_Su5_D2-typ_SF"/>
</dbReference>
<dbReference type="InterPro" id="IPR014721">
    <property type="entry name" value="Ribsml_uS5_D2-typ_fold_subgr"/>
</dbReference>
<dbReference type="InterPro" id="IPR005225">
    <property type="entry name" value="Small_GTP-bd"/>
</dbReference>
<dbReference type="InterPro" id="IPR000795">
    <property type="entry name" value="T_Tr_GTP-bd_dom"/>
</dbReference>
<dbReference type="InterPro" id="IPR009000">
    <property type="entry name" value="Transl_B-barrel_sf"/>
</dbReference>
<dbReference type="InterPro" id="IPR004540">
    <property type="entry name" value="Transl_elong_EFG/EF2"/>
</dbReference>
<dbReference type="InterPro" id="IPR005517">
    <property type="entry name" value="Transl_elong_EFG/EF2_IV"/>
</dbReference>
<dbReference type="NCBIfam" id="TIGR00484">
    <property type="entry name" value="EF-G"/>
    <property type="match status" value="1"/>
</dbReference>
<dbReference type="NCBIfam" id="NF009381">
    <property type="entry name" value="PRK12740.1-5"/>
    <property type="match status" value="1"/>
</dbReference>
<dbReference type="NCBIfam" id="TIGR00231">
    <property type="entry name" value="small_GTP"/>
    <property type="match status" value="1"/>
</dbReference>
<dbReference type="PANTHER" id="PTHR43636">
    <property type="entry name" value="ELONGATION FACTOR G, MITOCHONDRIAL"/>
    <property type="match status" value="1"/>
</dbReference>
<dbReference type="PANTHER" id="PTHR43636:SF2">
    <property type="entry name" value="ELONGATION FACTOR G, MITOCHONDRIAL"/>
    <property type="match status" value="1"/>
</dbReference>
<dbReference type="Pfam" id="PF00679">
    <property type="entry name" value="EFG_C"/>
    <property type="match status" value="1"/>
</dbReference>
<dbReference type="Pfam" id="PF14492">
    <property type="entry name" value="EFG_III"/>
    <property type="match status" value="1"/>
</dbReference>
<dbReference type="Pfam" id="PF03764">
    <property type="entry name" value="EFG_IV"/>
    <property type="match status" value="1"/>
</dbReference>
<dbReference type="Pfam" id="PF00009">
    <property type="entry name" value="GTP_EFTU"/>
    <property type="match status" value="1"/>
</dbReference>
<dbReference type="Pfam" id="PF03144">
    <property type="entry name" value="GTP_EFTU_D2"/>
    <property type="match status" value="1"/>
</dbReference>
<dbReference type="PRINTS" id="PR00315">
    <property type="entry name" value="ELONGATNFCT"/>
</dbReference>
<dbReference type="SMART" id="SM00838">
    <property type="entry name" value="EFG_C"/>
    <property type="match status" value="1"/>
</dbReference>
<dbReference type="SMART" id="SM00889">
    <property type="entry name" value="EFG_IV"/>
    <property type="match status" value="1"/>
</dbReference>
<dbReference type="SUPFAM" id="SSF54980">
    <property type="entry name" value="EF-G C-terminal domain-like"/>
    <property type="match status" value="2"/>
</dbReference>
<dbReference type="SUPFAM" id="SSF52540">
    <property type="entry name" value="P-loop containing nucleoside triphosphate hydrolases"/>
    <property type="match status" value="1"/>
</dbReference>
<dbReference type="SUPFAM" id="SSF54211">
    <property type="entry name" value="Ribosomal protein S5 domain 2-like"/>
    <property type="match status" value="1"/>
</dbReference>
<dbReference type="SUPFAM" id="SSF50447">
    <property type="entry name" value="Translation proteins"/>
    <property type="match status" value="1"/>
</dbReference>
<dbReference type="PROSITE" id="PS00301">
    <property type="entry name" value="G_TR_1"/>
    <property type="match status" value="1"/>
</dbReference>
<dbReference type="PROSITE" id="PS51722">
    <property type="entry name" value="G_TR_2"/>
    <property type="match status" value="1"/>
</dbReference>
<proteinExistence type="inferred from homology"/>
<name>EFGM_ASPFN</name>
<keyword id="KW-0251">Elongation factor</keyword>
<keyword id="KW-0342">GTP-binding</keyword>
<keyword id="KW-0496">Mitochondrion</keyword>
<keyword id="KW-0547">Nucleotide-binding</keyword>
<keyword id="KW-0648">Protein biosynthesis</keyword>
<keyword id="KW-0809">Transit peptide</keyword>
<protein>
    <recommendedName>
        <fullName evidence="1">Elongation factor G, mitochondrial</fullName>
        <shortName evidence="1">EF-Gmt</shortName>
    </recommendedName>
    <alternativeName>
        <fullName evidence="1">Elongation factor G 1, mitochondrial</fullName>
        <shortName evidence="1">mEF-G 1</shortName>
    </alternativeName>
    <alternativeName>
        <fullName evidence="1">Elongation factor G1</fullName>
    </alternativeName>
</protein>
<accession>B8N9M2</accession>
<sequence>MRCPSLTRLPYRAVSGLPRSVVRLQSQNFLTRRCASTAVLRSPTAAPAYQSILNKHLQQRRNASGTAAAVLEAAASDNLSQEAIIENLDPVEAGRLSRVRNIGIAAHIDSGKTTCTERVLFYTGRIKAIHEVRGGDKVGAKMDSMDLEREKGITIQSAATFCDWVKKDEDGKENKYHFNLIDTPGHIDFTIEVERALRVLDGAVMILCAVSGVQSQTITVDRQMRRYNVPRISFVNKMDRMGANPFKAVDQINNKLKLPAAAVQVPIGAEDEFEGVVDLIRMKAIYNRGPSGEELFETEEIPEKVKSTVEERRKKLIETLADVDDEIAELFILEEEPTEQQLKAAIRRATIGLKFTPVFMGSALANKSVQPMLDGVVDYLPNPAEVQNLALDKKRDEASVQLVPYQSLPLVGLAFKLEESNFGQLTYIRVYQGTLRKGANVFNARNDKKIKIPRIVRMHSNEMEEVSEVGAGEICAVFGVDCASGDTFTDGQLGYTMSSMFVPEPVISLSIKPKNNKDAAKFSKAMARFQREDPTFRVTYDVESEQTLISGMGELHLDIYVERMRREYNVDCETGPPQVAYRETIGNRVEFDHLLKKQSGGPGDYARVVGWMEPTGKLDDNVFEEQIVGGSISEKFLFACEKGFHLACEKGPLIGHKVLGTKMVINDGATHMTDSSEMSFKNATQQAFRKAFKESNPSVLEPMMKTVVTAPAEFQGDVISLLNKRNATINDSEVGVDEFTVYADCSLNGMFGFSSNLRAATQGKGEYTMEFSHYEKCPPQVQKELIAKYLKAQADRHKK</sequence>
<reference key="1">
    <citation type="journal article" date="2015" name="Genome Announc.">
        <title>Genome sequence of Aspergillus flavus NRRL 3357, a strain that causes aflatoxin contamination of food and feed.</title>
        <authorList>
            <person name="Nierman W.C."/>
            <person name="Yu J."/>
            <person name="Fedorova-Abrams N.D."/>
            <person name="Losada L."/>
            <person name="Cleveland T.E."/>
            <person name="Bhatnagar D."/>
            <person name="Bennett J.W."/>
            <person name="Dean R."/>
            <person name="Payne G.A."/>
        </authorList>
    </citation>
    <scope>NUCLEOTIDE SEQUENCE [LARGE SCALE GENOMIC DNA]</scope>
    <source>
        <strain>ATCC 200026 / FGSC A1120 / IAM 13836 / NRRL 3357 / JCM 12722 / SRRC 167</strain>
    </source>
</reference>
<evidence type="ECO:0000255" key="1">
    <source>
        <dbReference type="HAMAP-Rule" id="MF_03061"/>
    </source>
</evidence>
<evidence type="ECO:0000305" key="2"/>
<feature type="transit peptide" description="Mitochondrion" evidence="1">
    <location>
        <begin position="1"/>
        <end position="34"/>
    </location>
</feature>
<feature type="chain" id="PRO_0000385558" description="Elongation factor G, mitochondrial">
    <location>
        <begin position="35"/>
        <end position="799"/>
    </location>
</feature>
<feature type="domain" description="tr-type G">
    <location>
        <begin position="97"/>
        <end position="384"/>
    </location>
</feature>
<feature type="binding site" evidence="1">
    <location>
        <begin position="106"/>
        <end position="113"/>
    </location>
    <ligand>
        <name>GTP</name>
        <dbReference type="ChEBI" id="CHEBI:37565"/>
    </ligand>
</feature>
<feature type="binding site" evidence="1">
    <location>
        <begin position="182"/>
        <end position="186"/>
    </location>
    <ligand>
        <name>GTP</name>
        <dbReference type="ChEBI" id="CHEBI:37565"/>
    </ligand>
</feature>
<feature type="binding site" evidence="1">
    <location>
        <begin position="236"/>
        <end position="239"/>
    </location>
    <ligand>
        <name>GTP</name>
        <dbReference type="ChEBI" id="CHEBI:37565"/>
    </ligand>
</feature>
<organism>
    <name type="scientific">Aspergillus flavus (strain ATCC 200026 / FGSC A1120 / IAM 13836 / NRRL 3357 / JCM 12722 / SRRC 167)</name>
    <dbReference type="NCBI Taxonomy" id="332952"/>
    <lineage>
        <taxon>Eukaryota</taxon>
        <taxon>Fungi</taxon>
        <taxon>Dikarya</taxon>
        <taxon>Ascomycota</taxon>
        <taxon>Pezizomycotina</taxon>
        <taxon>Eurotiomycetes</taxon>
        <taxon>Eurotiomycetidae</taxon>
        <taxon>Eurotiales</taxon>
        <taxon>Aspergillaceae</taxon>
        <taxon>Aspergillus</taxon>
        <taxon>Aspergillus subgen. Circumdati</taxon>
    </lineage>
</organism>
<comment type="function">
    <text evidence="1">Mitochondrial GTPase that catalyzes the GTP-dependent ribosomal translocation step during translation elongation. During this step, the ribosome changes from the pre-translocational (PRE) to the post-translocational (POST) state as the newly formed A-site-bound peptidyl-tRNA and P-site-bound deacylated tRNA move to the P and E sites, respectively. Catalyzes the coordinated movement of the two tRNA molecules, the mRNA and conformational changes in the ribosome.</text>
</comment>
<comment type="pathway">
    <text evidence="1">Protein biosynthesis; polypeptide chain elongation.</text>
</comment>
<comment type="subcellular location">
    <subcellularLocation>
        <location evidence="1">Mitochondrion</location>
    </subcellularLocation>
</comment>
<comment type="similarity">
    <text evidence="2">Belongs to the TRAFAC class translation factor GTPase superfamily. Classic translation factor GTPase family. EF-G/EF-2 subfamily.</text>
</comment>